<keyword id="KW-1185">Reference proteome</keyword>
<keyword id="KW-0687">Ribonucleoprotein</keyword>
<keyword id="KW-0689">Ribosomal protein</keyword>
<accession>A5G7Z3</accession>
<feature type="chain" id="PRO_1000080353" description="Large ribosomal subunit protein bL19">
    <location>
        <begin position="1"/>
        <end position="118"/>
    </location>
</feature>
<gene>
    <name evidence="1" type="primary">rplS</name>
    <name type="ordered locus">Gura_3758</name>
</gene>
<organism>
    <name type="scientific">Geotalea uraniireducens (strain Rf4)</name>
    <name type="common">Geobacter uraniireducens</name>
    <dbReference type="NCBI Taxonomy" id="351605"/>
    <lineage>
        <taxon>Bacteria</taxon>
        <taxon>Pseudomonadati</taxon>
        <taxon>Thermodesulfobacteriota</taxon>
        <taxon>Desulfuromonadia</taxon>
        <taxon>Geobacterales</taxon>
        <taxon>Geobacteraceae</taxon>
        <taxon>Geotalea</taxon>
    </lineage>
</organism>
<proteinExistence type="inferred from homology"/>
<reference key="1">
    <citation type="submission" date="2007-05" db="EMBL/GenBank/DDBJ databases">
        <title>Complete sequence of Geobacter uraniireducens Rf4.</title>
        <authorList>
            <consortium name="US DOE Joint Genome Institute"/>
            <person name="Copeland A."/>
            <person name="Lucas S."/>
            <person name="Lapidus A."/>
            <person name="Barry K."/>
            <person name="Detter J.C."/>
            <person name="Glavina del Rio T."/>
            <person name="Hammon N."/>
            <person name="Israni S."/>
            <person name="Dalin E."/>
            <person name="Tice H."/>
            <person name="Pitluck S."/>
            <person name="Chertkov O."/>
            <person name="Brettin T."/>
            <person name="Bruce D."/>
            <person name="Han C."/>
            <person name="Schmutz J."/>
            <person name="Larimer F."/>
            <person name="Land M."/>
            <person name="Hauser L."/>
            <person name="Kyrpides N."/>
            <person name="Mikhailova N."/>
            <person name="Shelobolina E."/>
            <person name="Aklujkar M."/>
            <person name="Lovley D."/>
            <person name="Richardson P."/>
        </authorList>
    </citation>
    <scope>NUCLEOTIDE SEQUENCE [LARGE SCALE GENOMIC DNA]</scope>
    <source>
        <strain>ATCC BAA-1134 / JCM 13001 / Rf4</strain>
    </source>
</reference>
<name>RL19_GEOUR</name>
<evidence type="ECO:0000255" key="1">
    <source>
        <dbReference type="HAMAP-Rule" id="MF_00402"/>
    </source>
</evidence>
<evidence type="ECO:0000305" key="2"/>
<comment type="function">
    <text evidence="1">This protein is located at the 30S-50S ribosomal subunit interface and may play a role in the structure and function of the aminoacyl-tRNA binding site.</text>
</comment>
<comment type="similarity">
    <text evidence="1">Belongs to the bacterial ribosomal protein bL19 family.</text>
</comment>
<dbReference type="EMBL" id="CP000698">
    <property type="protein sequence ID" value="ABQ27911.1"/>
    <property type="molecule type" value="Genomic_DNA"/>
</dbReference>
<dbReference type="RefSeq" id="WP_011940560.1">
    <property type="nucleotide sequence ID" value="NC_009483.1"/>
</dbReference>
<dbReference type="SMR" id="A5G7Z3"/>
<dbReference type="STRING" id="351605.Gura_3758"/>
<dbReference type="KEGG" id="gur:Gura_3758"/>
<dbReference type="HOGENOM" id="CLU_103507_2_1_7"/>
<dbReference type="OrthoDB" id="9803541at2"/>
<dbReference type="Proteomes" id="UP000006695">
    <property type="component" value="Chromosome"/>
</dbReference>
<dbReference type="GO" id="GO:0022625">
    <property type="term" value="C:cytosolic large ribosomal subunit"/>
    <property type="evidence" value="ECO:0007669"/>
    <property type="project" value="TreeGrafter"/>
</dbReference>
<dbReference type="GO" id="GO:0003735">
    <property type="term" value="F:structural constituent of ribosome"/>
    <property type="evidence" value="ECO:0007669"/>
    <property type="project" value="InterPro"/>
</dbReference>
<dbReference type="GO" id="GO:0006412">
    <property type="term" value="P:translation"/>
    <property type="evidence" value="ECO:0007669"/>
    <property type="project" value="UniProtKB-UniRule"/>
</dbReference>
<dbReference type="FunFam" id="2.30.30.790:FF:000001">
    <property type="entry name" value="50S ribosomal protein L19"/>
    <property type="match status" value="1"/>
</dbReference>
<dbReference type="Gene3D" id="2.30.30.790">
    <property type="match status" value="1"/>
</dbReference>
<dbReference type="HAMAP" id="MF_00402">
    <property type="entry name" value="Ribosomal_bL19"/>
    <property type="match status" value="1"/>
</dbReference>
<dbReference type="InterPro" id="IPR001857">
    <property type="entry name" value="Ribosomal_bL19"/>
</dbReference>
<dbReference type="InterPro" id="IPR018257">
    <property type="entry name" value="Ribosomal_bL19_CS"/>
</dbReference>
<dbReference type="InterPro" id="IPR038657">
    <property type="entry name" value="Ribosomal_bL19_sf"/>
</dbReference>
<dbReference type="InterPro" id="IPR008991">
    <property type="entry name" value="Translation_prot_SH3-like_sf"/>
</dbReference>
<dbReference type="NCBIfam" id="TIGR01024">
    <property type="entry name" value="rplS_bact"/>
    <property type="match status" value="1"/>
</dbReference>
<dbReference type="PANTHER" id="PTHR15680:SF9">
    <property type="entry name" value="LARGE RIBOSOMAL SUBUNIT PROTEIN BL19M"/>
    <property type="match status" value="1"/>
</dbReference>
<dbReference type="PANTHER" id="PTHR15680">
    <property type="entry name" value="RIBOSOMAL PROTEIN L19"/>
    <property type="match status" value="1"/>
</dbReference>
<dbReference type="Pfam" id="PF01245">
    <property type="entry name" value="Ribosomal_L19"/>
    <property type="match status" value="1"/>
</dbReference>
<dbReference type="PIRSF" id="PIRSF002191">
    <property type="entry name" value="Ribosomal_L19"/>
    <property type="match status" value="1"/>
</dbReference>
<dbReference type="PRINTS" id="PR00061">
    <property type="entry name" value="RIBOSOMALL19"/>
</dbReference>
<dbReference type="SUPFAM" id="SSF50104">
    <property type="entry name" value="Translation proteins SH3-like domain"/>
    <property type="match status" value="1"/>
</dbReference>
<dbReference type="PROSITE" id="PS01015">
    <property type="entry name" value="RIBOSOMAL_L19"/>
    <property type="match status" value="1"/>
</dbReference>
<sequence length="118" mass="13456">MNKIDFIEMEQMKKNIPVFRPGDTVKVHVKIVEGDKSRIQVFQGVVIGRQNGGIRESFTVRKISNGIGVERSFPLHSPSVDAIEVITRGQVRRAKLYYLRKLRGKASRIKEKKYVAGM</sequence>
<protein>
    <recommendedName>
        <fullName evidence="1">Large ribosomal subunit protein bL19</fullName>
    </recommendedName>
    <alternativeName>
        <fullName evidence="2">50S ribosomal protein L19</fullName>
    </alternativeName>
</protein>